<protein>
    <recommendedName>
        <fullName>Magnesium/proton exchanger 2</fullName>
    </recommendedName>
    <alternativeName>
        <fullName>Mg(2+)/H(+) exchanger 2</fullName>
    </alternativeName>
    <alternativeName>
        <fullName>Zinc/proton exchanger 2</fullName>
    </alternativeName>
    <alternativeName>
        <fullName>Zn(2+)/H(+) exchanger 2</fullName>
    </alternativeName>
</protein>
<evidence type="ECO:0000250" key="1"/>
<evidence type="ECO:0000255" key="2"/>
<evidence type="ECO:0000305" key="3"/>
<dbReference type="EMBL" id="AP005291">
    <property type="protein sequence ID" value="BAD25799.1"/>
    <property type="status" value="ALT_SEQ"/>
    <property type="molecule type" value="Genomic_DNA"/>
</dbReference>
<dbReference type="EMBL" id="AP005306">
    <property type="protein sequence ID" value="BAD25808.1"/>
    <property type="status" value="ALT_SEQ"/>
    <property type="molecule type" value="Genomic_DNA"/>
</dbReference>
<dbReference type="EMBL" id="AP008208">
    <property type="protein sequence ID" value="BAF09483.2"/>
    <property type="status" value="ALT_SEQ"/>
    <property type="molecule type" value="Genomic_DNA"/>
</dbReference>
<dbReference type="EMBL" id="AP014958">
    <property type="status" value="NOT_ANNOTATED_CDS"/>
    <property type="molecule type" value="Genomic_DNA"/>
</dbReference>
<dbReference type="FunCoup" id="Q6H641">
    <property type="interactions" value="1693"/>
</dbReference>
<dbReference type="STRING" id="39947.Q6H641"/>
<dbReference type="PaxDb" id="39947-Q6H641"/>
<dbReference type="KEGG" id="dosa:Os02g0644900"/>
<dbReference type="InParanoid" id="Q6H641"/>
<dbReference type="Proteomes" id="UP000000763">
    <property type="component" value="Chromosome 2"/>
</dbReference>
<dbReference type="Proteomes" id="UP000059680">
    <property type="component" value="Chromosome 2"/>
</dbReference>
<dbReference type="GO" id="GO:0016020">
    <property type="term" value="C:membrane"/>
    <property type="evidence" value="ECO:0000318"/>
    <property type="project" value="GO_Central"/>
</dbReference>
<dbReference type="GO" id="GO:0005774">
    <property type="term" value="C:vacuolar membrane"/>
    <property type="evidence" value="ECO:0007669"/>
    <property type="project" value="UniProtKB-SubCell"/>
</dbReference>
<dbReference type="GO" id="GO:0030001">
    <property type="term" value="P:metal ion transport"/>
    <property type="evidence" value="ECO:0000318"/>
    <property type="project" value="GO_Central"/>
</dbReference>
<dbReference type="GO" id="GO:0055085">
    <property type="term" value="P:transmembrane transport"/>
    <property type="evidence" value="ECO:0007669"/>
    <property type="project" value="InterPro"/>
</dbReference>
<dbReference type="Gene3D" id="1.20.1420.30">
    <property type="entry name" value="NCX, central ion-binding region"/>
    <property type="match status" value="2"/>
</dbReference>
<dbReference type="InterPro" id="IPR051171">
    <property type="entry name" value="CaCA"/>
</dbReference>
<dbReference type="InterPro" id="IPR004837">
    <property type="entry name" value="NaCa_Exmemb"/>
</dbReference>
<dbReference type="InterPro" id="IPR044880">
    <property type="entry name" value="NCX_ion-bd_dom_sf"/>
</dbReference>
<dbReference type="PANTHER" id="PTHR11878:SF65">
    <property type="entry name" value="NA_CA-EXCHANGE PROTEIN, ISOFORM G"/>
    <property type="match status" value="1"/>
</dbReference>
<dbReference type="PANTHER" id="PTHR11878">
    <property type="entry name" value="SODIUM/CALCIUM EXCHANGER"/>
    <property type="match status" value="1"/>
</dbReference>
<dbReference type="Pfam" id="PF01699">
    <property type="entry name" value="Na_Ca_ex"/>
    <property type="match status" value="2"/>
</dbReference>
<comment type="function">
    <text evidence="1">Vacuolar transporter that exchanges protons with Mg(2+), Zn(2+) and Fe(2+) ions. May control the partitioning of Mg(2+) and Zn(2+) between plant organs (By similarity).</text>
</comment>
<comment type="subcellular location">
    <subcellularLocation>
        <location evidence="1">Vacuole membrane</location>
        <topology evidence="1">Multi-pass membrane protein</topology>
    </subcellularLocation>
</comment>
<comment type="similarity">
    <text evidence="3">Belongs to the Ca(2+):cation antiporter (CaCA) (TC 2.A.19) family. MHX subfamily.</text>
</comment>
<comment type="sequence caution" evidence="3">
    <conflict type="erroneous gene model prediction">
        <sequence resource="EMBL-CDS" id="BAD25799"/>
    </conflict>
</comment>
<comment type="sequence caution" evidence="3">
    <conflict type="erroneous gene model prediction">
        <sequence resource="EMBL-CDS" id="BAD25808"/>
    </conflict>
</comment>
<comment type="sequence caution" evidence="3">
    <conflict type="erroneous gene model prediction">
        <sequence resource="EMBL-CDS" id="BAF09483"/>
    </conflict>
</comment>
<sequence length="524" mass="58261">MANINMADTAPSCDTYLLFNGETLLPNGVRAFIYTVVLAYCFIGLSAISGRFFKSMESIMRHSREVVTIDPHTNATIVKHEKVWNYTIADVALLAFGTSFPQISLATIDAIRNLGQLTAGGLGPGTLVGSAAFDLFPIHAVCVVMPRAGSKKKISDLGVWLVELFWSFWAYIWLYIILEVWTPRVITLWEALLTVLQYGLLLLHAYAQDKRWPYVSIPLARGDRPEDWVPTEDASVDYDDNYDGIGDILPGQNEDIVDIFSARSYSNEGYHHVSEKDVEESPTGLTLKNKWEDTHWFSIWWQQFVDAATLESSVSRKMDSTCLSVIGISWNLIIAPWKMLFAFIPPYEIAHGWIAFICSLIFISGIAYGVTKITDQISCVTGVSPYVIAFTALAAGTSWPDLVASKIAAERQITADSAIANITCSNSVNIYVGIGVPWLVDTMYNYLFVYKKPLYIDNAAGLSFSLLVFFATSFGCITVLVLRRVILGAELGGPRMWAWATSVYFMILWVVFVVLSSLRISGVI</sequence>
<name>MHX2_ORYSJ</name>
<reference key="1">
    <citation type="journal article" date="2005" name="Nature">
        <title>The map-based sequence of the rice genome.</title>
        <authorList>
            <consortium name="International rice genome sequencing project (IRGSP)"/>
        </authorList>
    </citation>
    <scope>NUCLEOTIDE SEQUENCE [LARGE SCALE GENOMIC DNA]</scope>
    <source>
        <strain>cv. Nipponbare</strain>
    </source>
</reference>
<reference key="2">
    <citation type="journal article" date="2008" name="Nucleic Acids Res.">
        <title>The rice annotation project database (RAP-DB): 2008 update.</title>
        <authorList>
            <consortium name="The rice annotation project (RAP)"/>
        </authorList>
    </citation>
    <scope>GENOME REANNOTATION</scope>
    <source>
        <strain>cv. Nipponbare</strain>
    </source>
</reference>
<reference key="3">
    <citation type="journal article" date="2013" name="Rice">
        <title>Improvement of the Oryza sativa Nipponbare reference genome using next generation sequence and optical map data.</title>
        <authorList>
            <person name="Kawahara Y."/>
            <person name="de la Bastide M."/>
            <person name="Hamilton J.P."/>
            <person name="Kanamori H."/>
            <person name="McCombie W.R."/>
            <person name="Ouyang S."/>
            <person name="Schwartz D.C."/>
            <person name="Tanaka T."/>
            <person name="Wu J."/>
            <person name="Zhou S."/>
            <person name="Childs K.L."/>
            <person name="Davidson R.M."/>
            <person name="Lin H."/>
            <person name="Quesada-Ocampo L."/>
            <person name="Vaillancourt B."/>
            <person name="Sakai H."/>
            <person name="Lee S.S."/>
            <person name="Kim J."/>
            <person name="Numa H."/>
            <person name="Itoh T."/>
            <person name="Buell C.R."/>
            <person name="Matsumoto T."/>
        </authorList>
    </citation>
    <scope>GENOME REANNOTATION</scope>
    <source>
        <strain>cv. Nipponbare</strain>
    </source>
</reference>
<gene>
    <name type="primary">MHX2</name>
    <name type="ordered locus">Os02g0644900</name>
    <name type="ordered locus">LOC_Os02g43110</name>
    <name type="ORF">OJ1282_H11.33</name>
    <name type="ORF">P0030D07.11</name>
</gene>
<accession>Q6H641</accession>
<accession>Q0DZ55</accession>
<organism>
    <name type="scientific">Oryza sativa subsp. japonica</name>
    <name type="common">Rice</name>
    <dbReference type="NCBI Taxonomy" id="39947"/>
    <lineage>
        <taxon>Eukaryota</taxon>
        <taxon>Viridiplantae</taxon>
        <taxon>Streptophyta</taxon>
        <taxon>Embryophyta</taxon>
        <taxon>Tracheophyta</taxon>
        <taxon>Spermatophyta</taxon>
        <taxon>Magnoliopsida</taxon>
        <taxon>Liliopsida</taxon>
        <taxon>Poales</taxon>
        <taxon>Poaceae</taxon>
        <taxon>BOP clade</taxon>
        <taxon>Oryzoideae</taxon>
        <taxon>Oryzeae</taxon>
        <taxon>Oryzinae</taxon>
        <taxon>Oryza</taxon>
        <taxon>Oryza sativa</taxon>
    </lineage>
</organism>
<feature type="chain" id="PRO_0000416779" description="Magnesium/proton exchanger 2">
    <location>
        <begin position="1"/>
        <end position="524"/>
    </location>
</feature>
<feature type="transmembrane region" description="Helical" evidence="2">
    <location>
        <begin position="28"/>
        <end position="48"/>
    </location>
</feature>
<feature type="transmembrane region" description="Helical" evidence="2">
    <location>
        <begin position="88"/>
        <end position="108"/>
    </location>
</feature>
<feature type="transmembrane region" description="Helical" evidence="2">
    <location>
        <begin position="125"/>
        <end position="145"/>
    </location>
</feature>
<feature type="transmembrane region" description="Helical" evidence="2">
    <location>
        <begin position="157"/>
        <end position="177"/>
    </location>
</feature>
<feature type="transmembrane region" description="Helical" evidence="2">
    <location>
        <begin position="185"/>
        <end position="205"/>
    </location>
</feature>
<feature type="transmembrane region" description="Helical" evidence="2">
    <location>
        <begin position="325"/>
        <end position="345"/>
    </location>
</feature>
<feature type="transmembrane region" description="Helical" evidence="2">
    <location>
        <begin position="349"/>
        <end position="369"/>
    </location>
</feature>
<feature type="transmembrane region" description="Helical" evidence="2">
    <location>
        <begin position="377"/>
        <end position="397"/>
    </location>
</feature>
<feature type="transmembrane region" description="Helical" evidence="2">
    <location>
        <begin position="430"/>
        <end position="450"/>
    </location>
</feature>
<feature type="transmembrane region" description="Helical" evidence="2">
    <location>
        <begin position="462"/>
        <end position="482"/>
    </location>
</feature>
<feature type="transmembrane region" description="Helical" evidence="2">
    <location>
        <begin position="496"/>
        <end position="516"/>
    </location>
</feature>
<proteinExistence type="inferred from homology"/>
<keyword id="KW-0406">Ion transport</keyword>
<keyword id="KW-0472">Membrane</keyword>
<keyword id="KW-1185">Reference proteome</keyword>
<keyword id="KW-0812">Transmembrane</keyword>
<keyword id="KW-1133">Transmembrane helix</keyword>
<keyword id="KW-0813">Transport</keyword>
<keyword id="KW-0926">Vacuole</keyword>